<feature type="chain" id="PRO_0000339165" description="UPF0591 membrane protein C15E1.02c">
    <location>
        <begin position="1"/>
        <end position="148"/>
    </location>
</feature>
<feature type="transmembrane region" description="Helical" evidence="1">
    <location>
        <begin position="14"/>
        <end position="34"/>
    </location>
</feature>
<feature type="transmembrane region" description="Helical" evidence="1">
    <location>
        <begin position="80"/>
        <end position="102"/>
    </location>
</feature>
<feature type="transmembrane region" description="Helical" evidence="1">
    <location>
        <begin position="122"/>
        <end position="142"/>
    </location>
</feature>
<accession>Q9UTI9</accession>
<sequence length="148" mass="15941">MPSYTHMPYVRPSAILLGIAFDHAASFLVYGPLMGDIWKRAMSTAPHVEYDAGSKTKKVATTYVSNFLSTAVQSYSIAALLQLTGTVTLKGAFFVGLYVFGASGLPDVVDYMFTESRGTPYILVKTISSLVKSVGLSVALIGYGVRRI</sequence>
<evidence type="ECO:0000255" key="1"/>
<evidence type="ECO:0000305" key="2"/>
<dbReference type="EMBL" id="CU329670">
    <property type="protein sequence ID" value="CAB52421.1"/>
    <property type="molecule type" value="Genomic_DNA"/>
</dbReference>
<dbReference type="PIR" id="T37717">
    <property type="entry name" value="T37717"/>
</dbReference>
<dbReference type="RefSeq" id="NP_594303.1">
    <property type="nucleotide sequence ID" value="NM_001019726.2"/>
</dbReference>
<dbReference type="BioGRID" id="279208">
    <property type="interactions" value="13"/>
</dbReference>
<dbReference type="STRING" id="284812.Q9UTI9"/>
<dbReference type="PaxDb" id="4896-SPAC15E1.02c.1"/>
<dbReference type="EnsemblFungi" id="SPAC15E1.02c.1">
    <property type="protein sequence ID" value="SPAC15E1.02c.1:pep"/>
    <property type="gene ID" value="SPAC15E1.02c"/>
</dbReference>
<dbReference type="KEGG" id="spo:2542758"/>
<dbReference type="PomBase" id="SPAC15E1.02c"/>
<dbReference type="VEuPathDB" id="FungiDB:SPAC15E1.02c"/>
<dbReference type="eggNOG" id="ENOG502S2WW">
    <property type="taxonomic scope" value="Eukaryota"/>
</dbReference>
<dbReference type="HOGENOM" id="CLU_123426_0_0_1"/>
<dbReference type="InParanoid" id="Q9UTI9"/>
<dbReference type="OMA" id="LNWWGTR"/>
<dbReference type="PhylomeDB" id="Q9UTI9"/>
<dbReference type="PRO" id="PR:Q9UTI9"/>
<dbReference type="Proteomes" id="UP000002485">
    <property type="component" value="Chromosome I"/>
</dbReference>
<dbReference type="GO" id="GO:0016020">
    <property type="term" value="C:membrane"/>
    <property type="evidence" value="ECO:0007669"/>
    <property type="project" value="UniProtKB-SubCell"/>
</dbReference>
<dbReference type="InterPro" id="IPR013879">
    <property type="entry name" value="DUF1761"/>
</dbReference>
<dbReference type="PANTHER" id="PTHR40638">
    <property type="entry name" value="UPF0591 MEMBRANE PROTEIN C15E1.02C"/>
    <property type="match status" value="1"/>
</dbReference>
<dbReference type="PANTHER" id="PTHR40638:SF1">
    <property type="entry name" value="UPF0591 MEMBRANE PROTEIN C15E1.02C"/>
    <property type="match status" value="1"/>
</dbReference>
<dbReference type="Pfam" id="PF08570">
    <property type="entry name" value="DUF1761"/>
    <property type="match status" value="1"/>
</dbReference>
<proteinExistence type="inferred from homology"/>
<reference key="1">
    <citation type="journal article" date="2002" name="Nature">
        <title>The genome sequence of Schizosaccharomyces pombe.</title>
        <authorList>
            <person name="Wood V."/>
            <person name="Gwilliam R."/>
            <person name="Rajandream M.A."/>
            <person name="Lyne M.H."/>
            <person name="Lyne R."/>
            <person name="Stewart A."/>
            <person name="Sgouros J.G."/>
            <person name="Peat N."/>
            <person name="Hayles J."/>
            <person name="Baker S.G."/>
            <person name="Basham D."/>
            <person name="Bowman S."/>
            <person name="Brooks K."/>
            <person name="Brown D."/>
            <person name="Brown S."/>
            <person name="Chillingworth T."/>
            <person name="Churcher C.M."/>
            <person name="Collins M."/>
            <person name="Connor R."/>
            <person name="Cronin A."/>
            <person name="Davis P."/>
            <person name="Feltwell T."/>
            <person name="Fraser A."/>
            <person name="Gentles S."/>
            <person name="Goble A."/>
            <person name="Hamlin N."/>
            <person name="Harris D.E."/>
            <person name="Hidalgo J."/>
            <person name="Hodgson G."/>
            <person name="Holroyd S."/>
            <person name="Hornsby T."/>
            <person name="Howarth S."/>
            <person name="Huckle E.J."/>
            <person name="Hunt S."/>
            <person name="Jagels K."/>
            <person name="James K.D."/>
            <person name="Jones L."/>
            <person name="Jones M."/>
            <person name="Leather S."/>
            <person name="McDonald S."/>
            <person name="McLean J."/>
            <person name="Mooney P."/>
            <person name="Moule S."/>
            <person name="Mungall K.L."/>
            <person name="Murphy L.D."/>
            <person name="Niblett D."/>
            <person name="Odell C."/>
            <person name="Oliver K."/>
            <person name="O'Neil S."/>
            <person name="Pearson D."/>
            <person name="Quail M.A."/>
            <person name="Rabbinowitsch E."/>
            <person name="Rutherford K.M."/>
            <person name="Rutter S."/>
            <person name="Saunders D."/>
            <person name="Seeger K."/>
            <person name="Sharp S."/>
            <person name="Skelton J."/>
            <person name="Simmonds M.N."/>
            <person name="Squares R."/>
            <person name="Squares S."/>
            <person name="Stevens K."/>
            <person name="Taylor K."/>
            <person name="Taylor R.G."/>
            <person name="Tivey A."/>
            <person name="Walsh S.V."/>
            <person name="Warren T."/>
            <person name="Whitehead S."/>
            <person name="Woodward J.R."/>
            <person name="Volckaert G."/>
            <person name="Aert R."/>
            <person name="Robben J."/>
            <person name="Grymonprez B."/>
            <person name="Weltjens I."/>
            <person name="Vanstreels E."/>
            <person name="Rieger M."/>
            <person name="Schaefer M."/>
            <person name="Mueller-Auer S."/>
            <person name="Gabel C."/>
            <person name="Fuchs M."/>
            <person name="Duesterhoeft A."/>
            <person name="Fritzc C."/>
            <person name="Holzer E."/>
            <person name="Moestl D."/>
            <person name="Hilbert H."/>
            <person name="Borzym K."/>
            <person name="Langer I."/>
            <person name="Beck A."/>
            <person name="Lehrach H."/>
            <person name="Reinhardt R."/>
            <person name="Pohl T.M."/>
            <person name="Eger P."/>
            <person name="Zimmermann W."/>
            <person name="Wedler H."/>
            <person name="Wambutt R."/>
            <person name="Purnelle B."/>
            <person name="Goffeau A."/>
            <person name="Cadieu E."/>
            <person name="Dreano S."/>
            <person name="Gloux S."/>
            <person name="Lelaure V."/>
            <person name="Mottier S."/>
            <person name="Galibert F."/>
            <person name="Aves S.J."/>
            <person name="Xiang Z."/>
            <person name="Hunt C."/>
            <person name="Moore K."/>
            <person name="Hurst S.M."/>
            <person name="Lucas M."/>
            <person name="Rochet M."/>
            <person name="Gaillardin C."/>
            <person name="Tallada V.A."/>
            <person name="Garzon A."/>
            <person name="Thode G."/>
            <person name="Daga R.R."/>
            <person name="Cruzado L."/>
            <person name="Jimenez J."/>
            <person name="Sanchez M."/>
            <person name="del Rey F."/>
            <person name="Benito J."/>
            <person name="Dominguez A."/>
            <person name="Revuelta J.L."/>
            <person name="Moreno S."/>
            <person name="Armstrong J."/>
            <person name="Forsburg S.L."/>
            <person name="Cerutti L."/>
            <person name="Lowe T."/>
            <person name="McCombie W.R."/>
            <person name="Paulsen I."/>
            <person name="Potashkin J."/>
            <person name="Shpakovski G.V."/>
            <person name="Ussery D."/>
            <person name="Barrell B.G."/>
            <person name="Nurse P."/>
        </authorList>
    </citation>
    <scope>NUCLEOTIDE SEQUENCE [LARGE SCALE GENOMIC DNA]</scope>
    <source>
        <strain>972 / ATCC 24843</strain>
    </source>
</reference>
<gene>
    <name type="ORF">SPAC15E1.02c</name>
</gene>
<comment type="subcellular location">
    <subcellularLocation>
        <location evidence="2">Membrane</location>
        <topology evidence="2">Multi-pass membrane protein</topology>
    </subcellularLocation>
</comment>
<comment type="similarity">
    <text evidence="2">Belongs to the UPF0591 family.</text>
</comment>
<name>YKZ2_SCHPO</name>
<protein>
    <recommendedName>
        <fullName>UPF0591 membrane protein C15E1.02c</fullName>
    </recommendedName>
</protein>
<organism>
    <name type="scientific">Schizosaccharomyces pombe (strain 972 / ATCC 24843)</name>
    <name type="common">Fission yeast</name>
    <dbReference type="NCBI Taxonomy" id="284812"/>
    <lineage>
        <taxon>Eukaryota</taxon>
        <taxon>Fungi</taxon>
        <taxon>Dikarya</taxon>
        <taxon>Ascomycota</taxon>
        <taxon>Taphrinomycotina</taxon>
        <taxon>Schizosaccharomycetes</taxon>
        <taxon>Schizosaccharomycetales</taxon>
        <taxon>Schizosaccharomycetaceae</taxon>
        <taxon>Schizosaccharomyces</taxon>
    </lineage>
</organism>
<keyword id="KW-0472">Membrane</keyword>
<keyword id="KW-1185">Reference proteome</keyword>
<keyword id="KW-0812">Transmembrane</keyword>
<keyword id="KW-1133">Transmembrane helix</keyword>